<comment type="function">
    <text evidence="2">Monomeric globin with a bis-histidyl six-coordinate heme-iron atom through which it can bind dioxygen, carbon monoxide and nitric oxide. Could help transport oxygen and increase its availability to the metabolically active neuronal tissues, though its low quantity in tissues as well as its high affinity for dioxygen, which may limit its oxygen-releasing ability, argue against it. The ferrous/deoxygenated form exhibits a nitrite reductase activity and it could produce nitric oxide which in turn inhibits cellular respiration in response to hypoxia. In its ferrous/deoxygenated state, it may also exhibit GDI (Guanine nucleotide Dissociation Inhibitor) activity toward heterotrimeric G-alpha proteins, thereby regulating signal transduction to facilitate neuroprotective responses in the wake of hypoxia and associated oxidative stress.</text>
</comment>
<comment type="catalytic activity">
    <reaction evidence="2">
        <text>Fe(III)-heme b-[protein] + nitric oxide + H2O = Fe(II)-heme b-[protein] + nitrite + 2 H(+)</text>
        <dbReference type="Rhea" id="RHEA:77711"/>
        <dbReference type="Rhea" id="RHEA-COMP:18975"/>
        <dbReference type="Rhea" id="RHEA-COMP:18976"/>
        <dbReference type="ChEBI" id="CHEBI:15377"/>
        <dbReference type="ChEBI" id="CHEBI:15378"/>
        <dbReference type="ChEBI" id="CHEBI:16301"/>
        <dbReference type="ChEBI" id="CHEBI:16480"/>
        <dbReference type="ChEBI" id="CHEBI:55376"/>
        <dbReference type="ChEBI" id="CHEBI:60344"/>
    </reaction>
    <physiologicalReaction direction="right-to-left" evidence="2">
        <dbReference type="Rhea" id="RHEA:77713"/>
    </physiologicalReaction>
</comment>
<comment type="subunit">
    <text evidence="1 2">Monomer (By similarity). Homodimers and homotetramers. Mainly monomeric but also detected as part of homodimers and homotetramers (By similarity).</text>
</comment>
<comment type="subcellular location">
    <subcellularLocation>
        <location evidence="1">Cytoplasm</location>
        <location evidence="1">Cytosol</location>
    </subcellularLocation>
    <subcellularLocation>
        <location evidence="1">Mitochondrion matrix</location>
    </subcellularLocation>
    <text evidence="1">Enriched in mitochondrial matrix upon oxygen-glucose deprivation.</text>
</comment>
<comment type="similarity">
    <text evidence="3">Belongs to the globin family.</text>
</comment>
<evidence type="ECO:0000250" key="1">
    <source>
        <dbReference type="UniProtKB" id="Q9ER97"/>
    </source>
</evidence>
<evidence type="ECO:0000250" key="2">
    <source>
        <dbReference type="UniProtKB" id="Q9NPG2"/>
    </source>
</evidence>
<evidence type="ECO:0000255" key="3">
    <source>
        <dbReference type="PROSITE-ProRule" id="PRU00238"/>
    </source>
</evidence>
<evidence type="ECO:0000303" key="4">
    <source>
    </source>
</evidence>
<evidence type="ECO:0000305" key="5"/>
<sequence>MEKLSEKDKELIRGSWESLGKNKVPHGVVMFSRLFELDPELLTLFHYTTNCGSTQDCLSSPEFLEHVTKVMLVIDAAVSHLDDLPSLEDFLLNLGRKHQAVGVNTQSFAEVGESLLYMLQCSLGQAYTAPLRQAWLNLYSIVVAAMSQGWAKNGEDKAD</sequence>
<name>NGB_CHAAC</name>
<keyword id="KW-0963">Cytoplasm</keyword>
<keyword id="KW-0349">Heme</keyword>
<keyword id="KW-0408">Iron</keyword>
<keyword id="KW-0479">Metal-binding</keyword>
<keyword id="KW-0496">Mitochondrion</keyword>
<keyword id="KW-0560">Oxidoreductase</keyword>
<feature type="chain" id="PRO_0000419965" description="Neuroglobin">
    <location>
        <begin position="1"/>
        <end position="159"/>
    </location>
</feature>
<feature type="domain" description="Globin" evidence="3">
    <location>
        <begin position="3"/>
        <end position="151"/>
    </location>
</feature>
<feature type="binding site" description="distal binding residue; reversible" evidence="2 3">
    <location>
        <position position="66"/>
    </location>
    <ligand>
        <name>heme b</name>
        <dbReference type="ChEBI" id="CHEBI:60344"/>
    </ligand>
    <ligandPart>
        <name>Fe</name>
        <dbReference type="ChEBI" id="CHEBI:18248"/>
    </ligandPart>
</feature>
<feature type="binding site" description="proximal binding residue" evidence="2 3">
    <location>
        <position position="98"/>
    </location>
    <ligand>
        <name>heme b</name>
        <dbReference type="ChEBI" id="CHEBI:60344"/>
    </ligand>
    <ligandPart>
        <name>Fe</name>
        <dbReference type="ChEBI" id="CHEBI:18248"/>
    </ligandPart>
</feature>
<dbReference type="EC" id="1.7.-.-" evidence="2"/>
<dbReference type="SMR" id="P86880"/>
<dbReference type="GO" id="GO:0005829">
    <property type="term" value="C:cytosol"/>
    <property type="evidence" value="ECO:0007669"/>
    <property type="project" value="UniProtKB-SubCell"/>
</dbReference>
<dbReference type="GO" id="GO:0005759">
    <property type="term" value="C:mitochondrial matrix"/>
    <property type="evidence" value="ECO:0007669"/>
    <property type="project" value="UniProtKB-SubCell"/>
</dbReference>
<dbReference type="GO" id="GO:0005092">
    <property type="term" value="F:GDP-dissociation inhibitor activity"/>
    <property type="evidence" value="ECO:0000250"/>
    <property type="project" value="UniProtKB"/>
</dbReference>
<dbReference type="GO" id="GO:0020037">
    <property type="term" value="F:heme binding"/>
    <property type="evidence" value="ECO:0007669"/>
    <property type="project" value="InterPro"/>
</dbReference>
<dbReference type="GO" id="GO:0046872">
    <property type="term" value="F:metal ion binding"/>
    <property type="evidence" value="ECO:0007669"/>
    <property type="project" value="UniProtKB-KW"/>
</dbReference>
<dbReference type="GO" id="GO:0098809">
    <property type="term" value="F:nitrite reductase activity"/>
    <property type="evidence" value="ECO:0000250"/>
    <property type="project" value="UniProtKB"/>
</dbReference>
<dbReference type="GO" id="GO:0019825">
    <property type="term" value="F:oxygen binding"/>
    <property type="evidence" value="ECO:0000250"/>
    <property type="project" value="UniProtKB"/>
</dbReference>
<dbReference type="GO" id="GO:0071456">
    <property type="term" value="P:cellular response to hypoxia"/>
    <property type="evidence" value="ECO:0000250"/>
    <property type="project" value="UniProtKB"/>
</dbReference>
<dbReference type="Gene3D" id="1.10.490.10">
    <property type="entry name" value="Globins"/>
    <property type="match status" value="1"/>
</dbReference>
<dbReference type="InterPro" id="IPR000971">
    <property type="entry name" value="Globin"/>
</dbReference>
<dbReference type="InterPro" id="IPR050532">
    <property type="entry name" value="Globin-like_OT"/>
</dbReference>
<dbReference type="InterPro" id="IPR009050">
    <property type="entry name" value="Globin-like_sf"/>
</dbReference>
<dbReference type="InterPro" id="IPR012292">
    <property type="entry name" value="Globin/Proto"/>
</dbReference>
<dbReference type="PANTHER" id="PTHR46458">
    <property type="entry name" value="BLR2807 PROTEIN"/>
    <property type="match status" value="1"/>
</dbReference>
<dbReference type="PANTHER" id="PTHR46458:SF19">
    <property type="entry name" value="NEUROGLOBIN"/>
    <property type="match status" value="1"/>
</dbReference>
<dbReference type="Pfam" id="PF00042">
    <property type="entry name" value="Globin"/>
    <property type="match status" value="1"/>
</dbReference>
<dbReference type="PRINTS" id="PR00188">
    <property type="entry name" value="PLANTGLOBIN"/>
</dbReference>
<dbReference type="SUPFAM" id="SSF46458">
    <property type="entry name" value="Globin-like"/>
    <property type="match status" value="1"/>
</dbReference>
<dbReference type="PROSITE" id="PS01033">
    <property type="entry name" value="GLOBIN"/>
    <property type="match status" value="1"/>
</dbReference>
<reference evidence="5" key="1">
    <citation type="journal article" date="2011" name="IUBMB Life">
        <title>Structure and dynamics of Antarctic fish neuroglobin assessed by computer simulations.</title>
        <authorList>
            <person name="Boron I."/>
            <person name="Russo R."/>
            <person name="Boechi L."/>
            <person name="Cheng C.H."/>
            <person name="di Prisco G."/>
            <person name="Estrin D.A."/>
            <person name="Verde C."/>
            <person name="Nadra A.D."/>
        </authorList>
    </citation>
    <scope>NUCLEOTIDE SEQUENCE [MRNA]</scope>
    <source>
        <tissue>Brain</tissue>
    </source>
</reference>
<proteinExistence type="evidence at transcript level"/>
<protein>
    <recommendedName>
        <fullName evidence="4">Neuroglobin</fullName>
    </recommendedName>
    <alternativeName>
        <fullName evidence="2">Nitrite reductase</fullName>
        <ecNumber evidence="2">1.7.-.-</ecNumber>
    </alternativeName>
</protein>
<organism>
    <name type="scientific">Chaenocephalus aceratus</name>
    <name type="common">Blackfin icefish</name>
    <name type="synonym">Chaenichthys aceratus</name>
    <dbReference type="NCBI Taxonomy" id="36190"/>
    <lineage>
        <taxon>Eukaryota</taxon>
        <taxon>Metazoa</taxon>
        <taxon>Chordata</taxon>
        <taxon>Craniata</taxon>
        <taxon>Vertebrata</taxon>
        <taxon>Euteleostomi</taxon>
        <taxon>Actinopterygii</taxon>
        <taxon>Neopterygii</taxon>
        <taxon>Teleostei</taxon>
        <taxon>Neoteleostei</taxon>
        <taxon>Acanthomorphata</taxon>
        <taxon>Eupercaria</taxon>
        <taxon>Perciformes</taxon>
        <taxon>Notothenioidei</taxon>
        <taxon>Channichthyidae</taxon>
        <taxon>Chaenocephalus</taxon>
    </lineage>
</organism>
<accession>P86880</accession>
<gene>
    <name type="primary">ngb</name>
</gene>